<organism>
    <name type="scientific">Salmonella typhimurium (strain LT2 / SGSC1412 / ATCC 700720)</name>
    <dbReference type="NCBI Taxonomy" id="99287"/>
    <lineage>
        <taxon>Bacteria</taxon>
        <taxon>Pseudomonadati</taxon>
        <taxon>Pseudomonadota</taxon>
        <taxon>Gammaproteobacteria</taxon>
        <taxon>Enterobacterales</taxon>
        <taxon>Enterobacteriaceae</taxon>
        <taxon>Salmonella</taxon>
    </lineage>
</organism>
<accession>Q8ZP64</accession>
<evidence type="ECO:0000250" key="1"/>
<evidence type="ECO:0000255" key="2"/>
<evidence type="ECO:0000256" key="3">
    <source>
        <dbReference type="SAM" id="MobiDB-lite"/>
    </source>
</evidence>
<evidence type="ECO:0000305" key="4"/>
<keyword id="KW-0997">Cell inner membrane</keyword>
<keyword id="KW-1003">Cell membrane</keyword>
<keyword id="KW-0472">Membrane</keyword>
<keyword id="KW-1185">Reference proteome</keyword>
<keyword id="KW-0812">Transmembrane</keyword>
<keyword id="KW-1133">Transmembrane helix</keyword>
<feature type="chain" id="PRO_0000214184" description="UPF0283 membrane protein YcjF">
    <location>
        <begin position="1"/>
        <end position="353"/>
    </location>
</feature>
<feature type="topological domain" description="Periplasmic" evidence="2">
    <location>
        <begin position="1"/>
        <end position="69"/>
    </location>
</feature>
<feature type="transmembrane region" description="Helical" evidence="2">
    <location>
        <begin position="70"/>
        <end position="90"/>
    </location>
</feature>
<feature type="topological domain" description="Cytoplasmic" evidence="2">
    <location>
        <begin position="91"/>
        <end position="99"/>
    </location>
</feature>
<feature type="transmembrane region" description="Helical" evidence="2">
    <location>
        <begin position="100"/>
        <end position="120"/>
    </location>
</feature>
<feature type="topological domain" description="Periplasmic" evidence="2">
    <location>
        <begin position="121"/>
        <end position="212"/>
    </location>
</feature>
<feature type="transmembrane region" description="Helical" evidence="2">
    <location>
        <begin position="213"/>
        <end position="233"/>
    </location>
</feature>
<feature type="topological domain" description="Cytoplasmic" evidence="2">
    <location>
        <begin position="234"/>
        <end position="353"/>
    </location>
</feature>
<feature type="region of interest" description="Disordered" evidence="3">
    <location>
        <begin position="1"/>
        <end position="35"/>
    </location>
</feature>
<feature type="compositionally biased region" description="Basic and acidic residues" evidence="3">
    <location>
        <begin position="1"/>
        <end position="19"/>
    </location>
</feature>
<proteinExistence type="inferred from homology"/>
<name>YCJF_SALTY</name>
<comment type="subcellular location">
    <subcellularLocation>
        <location evidence="1">Cell inner membrane</location>
        <topology evidence="1">Multi-pass membrane protein</topology>
    </subcellularLocation>
</comment>
<comment type="similarity">
    <text evidence="4">Belongs to the UPF0283 family.</text>
</comment>
<protein>
    <recommendedName>
        <fullName>UPF0283 membrane protein YcjF</fullName>
    </recommendedName>
</protein>
<dbReference type="EMBL" id="AE006468">
    <property type="protein sequence ID" value="AAL20601.1"/>
    <property type="molecule type" value="Genomic_DNA"/>
</dbReference>
<dbReference type="RefSeq" id="NP_460642.1">
    <property type="nucleotide sequence ID" value="NC_003197.2"/>
</dbReference>
<dbReference type="RefSeq" id="WP_001294459.1">
    <property type="nucleotide sequence ID" value="NC_003197.2"/>
</dbReference>
<dbReference type="STRING" id="99287.STM1684"/>
<dbReference type="PaxDb" id="99287-STM1684"/>
<dbReference type="GeneID" id="1253202"/>
<dbReference type="KEGG" id="stm:STM1684"/>
<dbReference type="PATRIC" id="fig|99287.12.peg.1778"/>
<dbReference type="HOGENOM" id="CLU_057693_2_0_6"/>
<dbReference type="OMA" id="MFFIAWR"/>
<dbReference type="PhylomeDB" id="Q8ZP64"/>
<dbReference type="BioCyc" id="SENT99287:STM1684-MONOMER"/>
<dbReference type="Proteomes" id="UP000001014">
    <property type="component" value="Chromosome"/>
</dbReference>
<dbReference type="GO" id="GO:0005886">
    <property type="term" value="C:plasma membrane"/>
    <property type="evidence" value="ECO:0000318"/>
    <property type="project" value="GO_Central"/>
</dbReference>
<dbReference type="HAMAP" id="MF_01085">
    <property type="entry name" value="UPF0283"/>
    <property type="match status" value="1"/>
</dbReference>
<dbReference type="InterPro" id="IPR021147">
    <property type="entry name" value="DUF697"/>
</dbReference>
<dbReference type="InterPro" id="IPR006507">
    <property type="entry name" value="UPF0283"/>
</dbReference>
<dbReference type="NCBIfam" id="TIGR01620">
    <property type="entry name" value="hyp_HI0043"/>
    <property type="match status" value="1"/>
</dbReference>
<dbReference type="PANTHER" id="PTHR39342">
    <property type="entry name" value="UPF0283 MEMBRANE PROTEIN YCJF"/>
    <property type="match status" value="1"/>
</dbReference>
<dbReference type="PANTHER" id="PTHR39342:SF1">
    <property type="entry name" value="UPF0283 MEMBRANE PROTEIN YCJF"/>
    <property type="match status" value="1"/>
</dbReference>
<dbReference type="Pfam" id="PF05128">
    <property type="entry name" value="DUF697"/>
    <property type="match status" value="1"/>
</dbReference>
<reference key="1">
    <citation type="journal article" date="2001" name="Nature">
        <title>Complete genome sequence of Salmonella enterica serovar Typhimurium LT2.</title>
        <authorList>
            <person name="McClelland M."/>
            <person name="Sanderson K.E."/>
            <person name="Spieth J."/>
            <person name="Clifton S.W."/>
            <person name="Latreille P."/>
            <person name="Courtney L."/>
            <person name="Porwollik S."/>
            <person name="Ali J."/>
            <person name="Dante M."/>
            <person name="Du F."/>
            <person name="Hou S."/>
            <person name="Layman D."/>
            <person name="Leonard S."/>
            <person name="Nguyen C."/>
            <person name="Scott K."/>
            <person name="Holmes A."/>
            <person name="Grewal N."/>
            <person name="Mulvaney E."/>
            <person name="Ryan E."/>
            <person name="Sun H."/>
            <person name="Florea L."/>
            <person name="Miller W."/>
            <person name="Stoneking T."/>
            <person name="Nhan M."/>
            <person name="Waterston R."/>
            <person name="Wilson R.K."/>
        </authorList>
    </citation>
    <scope>NUCLEOTIDE SEQUENCE [LARGE SCALE GENOMIC DNA]</scope>
    <source>
        <strain>LT2 / SGSC1412 / ATCC 700720</strain>
    </source>
</reference>
<sequence>MSEPLKPRIDFAEPLKEEPTSAFKAQQTFSEAESRTFAPAAIDERPEDEGAAEAAVDAALRPKRSLWRKMVMGGLALFGASVVGQGVQWTMNAWQTQDWVALGGCAAGALIVGAGVGSVVTEWRRLWRLRQRAHERDEARELLHSHSVGKGRAFCEKLAQQAGIDQSHPALQRWYAAIHETQNDREIVGLYANLVQPVLDAQARREISRFAAESTLMIAVSPLALVDMAFIAWRNLRLINRIATLYGIELGYYSRLRLFRLVLLNIAFAGASELVREVGMDWMSQDLAARLSTRAAQGIGAGLLTARLGIKAMELCRPLPWIDNDKPRLGDFRRQLIGQLKETLQKSKSSPEK</sequence>
<gene>
    <name type="primary">ycjF</name>
    <name type="ordered locus">STM1684</name>
</gene>